<comment type="function">
    <text evidence="2 3 5">Associates with proteins harboring glycine-rich transmembrane domains and ensures their efficient localization to the cell surface (PubMed:25999474). Regulates the assembly and activity of V-ATPase in colon cancer cells via its interaction with V-type proton ATPase subunit H (ATP6V1H) and contributes to V-ATPase-mediated pH alterations in cancer cells which play an important role in drug resistance and invasiveness of colon cancer cells (PubMed:25659576). Plays an important role in an atypical phagocytic activity of metastatic melanoma cells called cannibalism and is involved in the pH regulation of the intracellular vesicles in tumor cells (PubMed:19893578).</text>
</comment>
<comment type="subunit">
    <text evidence="3">Interacts with ATP6V1H in colon cancer cells (PubMed:25659576).</text>
</comment>
<comment type="interaction">
    <interactant intactId="EBI-6138615">
        <id>Q92544</id>
    </interactant>
    <interactant intactId="EBI-1040727">
        <id>P13726</id>
        <label>F3</label>
    </interactant>
    <organismsDiffer>false</organismsDiffer>
    <experiments>2</experiments>
</comment>
<comment type="interaction">
    <interactant intactId="EBI-6138615">
        <id>Q92544</id>
    </interactant>
    <interactant intactId="EBI-359260">
        <id>P42345</id>
        <label>MTOR</label>
    </interactant>
    <organismsDiffer>false</organismsDiffer>
    <experiments>4</experiments>
</comment>
<comment type="subcellular location">
    <subcellularLocation>
        <location evidence="1">Membrane</location>
        <topology evidence="1">Multi-pass membrane protein</topology>
    </subcellularLocation>
    <subcellularLocation>
        <location evidence="5">Golgi apparatus</location>
    </subcellularLocation>
    <subcellularLocation>
        <location evidence="2">Early endosome</location>
    </subcellularLocation>
</comment>
<comment type="tissue specificity">
    <text evidence="2 4">Highly expressed in metastatic melanoma cells whereas it is undetectable in primary melanoma cells, healthy skin tissues and peripheral blood lymphocytes. Expressed in CD34(+) hematopoietic progenitor cells and during monocyte and granulocyte differentiation. Overexpressed in acute myeloid leukemia, in particular in those displaying granulocytic differentiation (at protein level).</text>
</comment>
<comment type="induction">
    <text evidence="4">Transcriptionally repressed following hypoxia by HIF1A in leukemic cells.</text>
</comment>
<comment type="similarity">
    <text evidence="7">Belongs to the nonaspanin (TM9SF) (TC 9.A.2) family.</text>
</comment>
<comment type="sequence caution" evidence="7">
    <conflict type="erroneous initiation">
        <sequence resource="EMBL-CDS" id="AAH21107"/>
    </conflict>
</comment>
<comment type="sequence caution" evidence="7">
    <conflict type="erroneous initiation">
        <sequence resource="EMBL-CDS" id="BAA13385"/>
    </conflict>
</comment>
<accession>Q92544</accession>
<accession>B0QYT7</accession>
<accession>Q9NUA3</accession>
<gene>
    <name type="primary">TM9SF4</name>
    <name type="synonym">KIAA0255</name>
    <name evidence="6" type="synonym">TUCAP1</name>
</gene>
<evidence type="ECO:0000255" key="1"/>
<evidence type="ECO:0000269" key="2">
    <source>
    </source>
</evidence>
<evidence type="ECO:0000269" key="3">
    <source>
    </source>
</evidence>
<evidence type="ECO:0000269" key="4">
    <source>
    </source>
</evidence>
<evidence type="ECO:0000269" key="5">
    <source>
    </source>
</evidence>
<evidence type="ECO:0000303" key="6">
    <source>
    </source>
</evidence>
<evidence type="ECO:0000305" key="7"/>
<evidence type="ECO:0007744" key="8">
    <source>
    </source>
</evidence>
<feature type="signal peptide" evidence="1">
    <location>
        <begin position="1"/>
        <end position="23"/>
    </location>
</feature>
<feature type="chain" id="PRO_0000210178" description="Transmembrane 9 superfamily member 4">
    <location>
        <begin position="24"/>
        <end position="642"/>
    </location>
</feature>
<feature type="topological domain" description="Extracellular" evidence="1">
    <location>
        <begin position="24"/>
        <end position="281"/>
    </location>
</feature>
<feature type="transmembrane region" description="Helical" evidence="1">
    <location>
        <begin position="282"/>
        <end position="302"/>
    </location>
</feature>
<feature type="topological domain" description="Cytoplasmic" evidence="1">
    <location>
        <begin position="303"/>
        <end position="346"/>
    </location>
</feature>
<feature type="transmembrane region" description="Helical" evidence="1">
    <location>
        <begin position="347"/>
        <end position="367"/>
    </location>
</feature>
<feature type="topological domain" description="Extracellular" evidence="1">
    <location>
        <begin position="368"/>
        <end position="376"/>
    </location>
</feature>
<feature type="transmembrane region" description="Helical" evidence="1">
    <location>
        <begin position="377"/>
        <end position="397"/>
    </location>
</feature>
<feature type="topological domain" description="Cytoplasmic" evidence="1">
    <location>
        <begin position="398"/>
        <end position="416"/>
    </location>
</feature>
<feature type="transmembrane region" description="Helical" evidence="1">
    <location>
        <begin position="417"/>
        <end position="437"/>
    </location>
</feature>
<feature type="topological domain" description="Extracellular" evidence="1">
    <location>
        <begin position="438"/>
        <end position="449"/>
    </location>
</feature>
<feature type="transmembrane region" description="Helical" evidence="1">
    <location>
        <begin position="450"/>
        <end position="470"/>
    </location>
</feature>
<feature type="topological domain" description="Cytoplasmic" evidence="1">
    <location>
        <begin position="471"/>
        <end position="501"/>
    </location>
</feature>
<feature type="transmembrane region" description="Helical" evidence="1">
    <location>
        <begin position="502"/>
        <end position="522"/>
    </location>
</feature>
<feature type="topological domain" description="Extracellular" evidence="1">
    <location>
        <begin position="523"/>
        <end position="535"/>
    </location>
</feature>
<feature type="transmembrane region" description="Helical" evidence="1">
    <location>
        <begin position="536"/>
        <end position="556"/>
    </location>
</feature>
<feature type="topological domain" description="Cytoplasmic" evidence="1">
    <location>
        <begin position="557"/>
        <end position="570"/>
    </location>
</feature>
<feature type="transmembrane region" description="Helical" evidence="1">
    <location>
        <begin position="571"/>
        <end position="591"/>
    </location>
</feature>
<feature type="topological domain" description="Extracellular" evidence="1">
    <location>
        <begin position="592"/>
        <end position="598"/>
    </location>
</feature>
<feature type="transmembrane region" description="Helical" evidence="1">
    <location>
        <begin position="599"/>
        <end position="619"/>
    </location>
</feature>
<feature type="topological domain" description="Cytoplasmic" evidence="1">
    <location>
        <begin position="620"/>
        <end position="642"/>
    </location>
</feature>
<feature type="modified residue" description="Phosphotyrosine" evidence="8">
    <location>
        <position position="312"/>
    </location>
</feature>
<sequence>MATAMDWLPWSLLLFSLMCETSAFYVPGVAPINFHQNDPVEIKAVKLTSSRTQLPYEYYSLPFCQPSKITYKAENLGEVLRGDRIVNTPFQVLMNSEKKCEVLCSQSNKPVTLTVEQSRLVAERITEDYYVHLIADNLPVATRLELYSNRDSDDKKKEKDVQFEHGYRLGFTDVNKIYLHNHLSFILYYHREDMEEDQEHTYRVVRFEVIPQSIRLEDLKADEKSSCTLPEGTNSSPQEIDPTKENQLYFTYSVHWEESDIKWASRWDTYLTMSDVQIHWFSIINSVVVVFFLSGILSMIIIRTLRKDIANYNKEDDIEDTMEESGWKLVHGDVFRPPQYPMILSSLLGSGIQLFCMILIVIFVAMLGMLSPSSRGALMTTACFLFMFMGVFGGFSAGRLYRTLKGHRWKKGAFCTATLYPGVVFGICFVLNCFIWGKHSSGAVPFPTMVALLCMWFGISLPLVYLGYYFGFRKQPYDNPVRTNQIPRQIPEQRWYMNRFVGILMAGILPFGAMFIELFFIFSAIWENQFYYLFGFLFLVFIILVVSCSQISIVMVYFQLCAEDYRWWWRNFLVSGGSAFYVLVYAIFYFVNKLDIVEFIPSLLYFGYTALMVLSFWLLTGTIGFYAAYMFVRKIYAAVKID</sequence>
<proteinExistence type="evidence at protein level"/>
<dbReference type="EMBL" id="D87444">
    <property type="protein sequence ID" value="BAA13385.2"/>
    <property type="status" value="ALT_INIT"/>
    <property type="molecule type" value="mRNA"/>
</dbReference>
<dbReference type="EMBL" id="AL049539">
    <property type="status" value="NOT_ANNOTATED_CDS"/>
    <property type="molecule type" value="Genomic_DNA"/>
</dbReference>
<dbReference type="EMBL" id="CH471077">
    <property type="protein sequence ID" value="EAW76391.1"/>
    <property type="molecule type" value="Genomic_DNA"/>
</dbReference>
<dbReference type="EMBL" id="BC021107">
    <property type="protein sequence ID" value="AAH21107.1"/>
    <property type="status" value="ALT_INIT"/>
    <property type="molecule type" value="mRNA"/>
</dbReference>
<dbReference type="EMBL" id="BC022850">
    <property type="protein sequence ID" value="AAH22850.2"/>
    <property type="molecule type" value="mRNA"/>
</dbReference>
<dbReference type="CCDS" id="CCDS13196.2"/>
<dbReference type="RefSeq" id="NP_055557.2">
    <property type="nucleotide sequence ID" value="NM_014742.4"/>
</dbReference>
<dbReference type="RefSeq" id="XP_005260679.1">
    <property type="nucleotide sequence ID" value="XM_005260622.4"/>
</dbReference>
<dbReference type="SMR" id="Q92544"/>
<dbReference type="BioGRID" id="115121">
    <property type="interactions" value="144"/>
</dbReference>
<dbReference type="FunCoup" id="Q92544">
    <property type="interactions" value="3320"/>
</dbReference>
<dbReference type="IntAct" id="Q92544">
    <property type="interactions" value="78"/>
</dbReference>
<dbReference type="MINT" id="Q92544"/>
<dbReference type="STRING" id="9606.ENSP00000381104"/>
<dbReference type="TCDB" id="8.A.68.1.3">
    <property type="family name" value="the endomembrane protein-70 (emp70) family"/>
</dbReference>
<dbReference type="TCDB" id="8.A.86.1.18">
    <property type="family name" value="the chloroplast trigalactosyldiacylglycerol-5 (tgd5) family"/>
</dbReference>
<dbReference type="GlyGen" id="Q92544">
    <property type="glycosylation" value="1 site, 1 O-linked glycan (1 site)"/>
</dbReference>
<dbReference type="iPTMnet" id="Q92544"/>
<dbReference type="PhosphoSitePlus" id="Q92544"/>
<dbReference type="SwissPalm" id="Q92544"/>
<dbReference type="BioMuta" id="TM9SF4"/>
<dbReference type="DMDM" id="172045829"/>
<dbReference type="jPOST" id="Q92544"/>
<dbReference type="MassIVE" id="Q92544"/>
<dbReference type="PaxDb" id="9606-ENSP00000381104"/>
<dbReference type="PeptideAtlas" id="Q92544"/>
<dbReference type="ProteomicsDB" id="75305"/>
<dbReference type="Pumba" id="Q92544"/>
<dbReference type="ABCD" id="Q92544">
    <property type="antibodies" value="2 sequenced antibodies"/>
</dbReference>
<dbReference type="Antibodypedia" id="42955">
    <property type="antibodies" value="113 antibodies from 20 providers"/>
</dbReference>
<dbReference type="DNASU" id="9777"/>
<dbReference type="Ensembl" id="ENST00000398022.7">
    <property type="protein sequence ID" value="ENSP00000381104.2"/>
    <property type="gene ID" value="ENSG00000101337.16"/>
</dbReference>
<dbReference type="GeneID" id="9777"/>
<dbReference type="KEGG" id="hsa:9777"/>
<dbReference type="MANE-Select" id="ENST00000398022.7">
    <property type="protein sequence ID" value="ENSP00000381104.2"/>
    <property type="RefSeq nucleotide sequence ID" value="NM_014742.4"/>
    <property type="RefSeq protein sequence ID" value="NP_055557.2"/>
</dbReference>
<dbReference type="UCSC" id="uc002wxj.2">
    <property type="organism name" value="human"/>
</dbReference>
<dbReference type="AGR" id="HGNC:30797"/>
<dbReference type="CTD" id="9777"/>
<dbReference type="DisGeNET" id="9777"/>
<dbReference type="GeneCards" id="TM9SF4"/>
<dbReference type="HGNC" id="HGNC:30797">
    <property type="gene designation" value="TM9SF4"/>
</dbReference>
<dbReference type="HPA" id="ENSG00000101337">
    <property type="expression patterns" value="Low tissue specificity"/>
</dbReference>
<dbReference type="MIM" id="617727">
    <property type="type" value="gene"/>
</dbReference>
<dbReference type="neXtProt" id="NX_Q92544"/>
<dbReference type="OpenTargets" id="ENSG00000101337"/>
<dbReference type="PharmGKB" id="PA134937613"/>
<dbReference type="VEuPathDB" id="HostDB:ENSG00000101337"/>
<dbReference type="eggNOG" id="KOG1278">
    <property type="taxonomic scope" value="Eukaryota"/>
</dbReference>
<dbReference type="GeneTree" id="ENSGT00940000157198"/>
<dbReference type="InParanoid" id="Q92544"/>
<dbReference type="OMA" id="VVGFEVY"/>
<dbReference type="OrthoDB" id="1666796at2759"/>
<dbReference type="PAN-GO" id="Q92544">
    <property type="GO annotations" value="2 GO annotations based on evolutionary models"/>
</dbReference>
<dbReference type="PhylomeDB" id="Q92544"/>
<dbReference type="TreeFam" id="TF354239"/>
<dbReference type="PathwayCommons" id="Q92544"/>
<dbReference type="SignaLink" id="Q92544"/>
<dbReference type="SIGNOR" id="Q92544"/>
<dbReference type="BioGRID-ORCS" id="9777">
    <property type="hits" value="17 hits in 1150 CRISPR screens"/>
</dbReference>
<dbReference type="ChiTaRS" id="TM9SF4">
    <property type="organism name" value="human"/>
</dbReference>
<dbReference type="GenomeRNAi" id="9777"/>
<dbReference type="Pharos" id="Q92544">
    <property type="development level" value="Tbio"/>
</dbReference>
<dbReference type="PRO" id="PR:Q92544"/>
<dbReference type="Proteomes" id="UP000005640">
    <property type="component" value="Chromosome 20"/>
</dbReference>
<dbReference type="RNAct" id="Q92544">
    <property type="molecule type" value="protein"/>
</dbReference>
<dbReference type="Bgee" id="ENSG00000101337">
    <property type="expression patterns" value="Expressed in stromal cell of endometrium and 206 other cell types or tissues"/>
</dbReference>
<dbReference type="ExpressionAtlas" id="Q92544">
    <property type="expression patterns" value="baseline and differential"/>
</dbReference>
<dbReference type="GO" id="GO:0005769">
    <property type="term" value="C:early endosome"/>
    <property type="evidence" value="ECO:0000314"/>
    <property type="project" value="UniProtKB"/>
</dbReference>
<dbReference type="GO" id="GO:0005794">
    <property type="term" value="C:Golgi apparatus"/>
    <property type="evidence" value="ECO:0000314"/>
    <property type="project" value="UniProtKB"/>
</dbReference>
<dbReference type="GO" id="GO:0016020">
    <property type="term" value="C:membrane"/>
    <property type="evidence" value="ECO:0000318"/>
    <property type="project" value="GO_Central"/>
</dbReference>
<dbReference type="GO" id="GO:0007155">
    <property type="term" value="P:cell adhesion"/>
    <property type="evidence" value="ECO:0000315"/>
    <property type="project" value="UniProtKB"/>
</dbReference>
<dbReference type="GO" id="GO:0006909">
    <property type="term" value="P:phagocytosis"/>
    <property type="evidence" value="ECO:0000315"/>
    <property type="project" value="UniProtKB"/>
</dbReference>
<dbReference type="GO" id="GO:0070863">
    <property type="term" value="P:positive regulation of protein exit from endoplasmic reticulum"/>
    <property type="evidence" value="ECO:0000315"/>
    <property type="project" value="UniProtKB"/>
</dbReference>
<dbReference type="GO" id="GO:2000010">
    <property type="term" value="P:positive regulation of protein localization to cell surface"/>
    <property type="evidence" value="ECO:0000315"/>
    <property type="project" value="UniProtKB"/>
</dbReference>
<dbReference type="GO" id="GO:0072657">
    <property type="term" value="P:protein localization to membrane"/>
    <property type="evidence" value="ECO:0000318"/>
    <property type="project" value="GO_Central"/>
</dbReference>
<dbReference type="GO" id="GO:0051453">
    <property type="term" value="P:regulation of intracellular pH"/>
    <property type="evidence" value="ECO:0000315"/>
    <property type="project" value="UniProtKB"/>
</dbReference>
<dbReference type="GO" id="GO:0001666">
    <property type="term" value="P:response to hypoxia"/>
    <property type="evidence" value="ECO:0000314"/>
    <property type="project" value="UniProtKB"/>
</dbReference>
<dbReference type="GO" id="GO:0070072">
    <property type="term" value="P:vacuolar proton-transporting V-type ATPase complex assembly"/>
    <property type="evidence" value="ECO:0000315"/>
    <property type="project" value="UniProtKB"/>
</dbReference>
<dbReference type="InterPro" id="IPR004240">
    <property type="entry name" value="EMP70"/>
</dbReference>
<dbReference type="PANTHER" id="PTHR10766:SF55">
    <property type="entry name" value="TRANSMEMBRANE 9 SUPERFAMILY MEMBER 4"/>
    <property type="match status" value="1"/>
</dbReference>
<dbReference type="PANTHER" id="PTHR10766">
    <property type="entry name" value="TRANSMEMBRANE 9 SUPERFAMILY PROTEIN"/>
    <property type="match status" value="1"/>
</dbReference>
<dbReference type="Pfam" id="PF02990">
    <property type="entry name" value="EMP70"/>
    <property type="match status" value="1"/>
</dbReference>
<reference key="1">
    <citation type="journal article" date="1996" name="DNA Res.">
        <title>Prediction of the coding sequences of unidentified human genes. VI. The coding sequences of 80 new genes (KIAA0201-KIAA0280) deduced by analysis of cDNA clones from cell line KG-1 and brain.</title>
        <authorList>
            <person name="Nagase T."/>
            <person name="Seki N."/>
            <person name="Ishikawa K."/>
            <person name="Ohira M."/>
            <person name="Kawarabayasi Y."/>
            <person name="Ohara O."/>
            <person name="Tanaka A."/>
            <person name="Kotani H."/>
            <person name="Miyajima N."/>
            <person name="Nomura N."/>
        </authorList>
    </citation>
    <scope>NUCLEOTIDE SEQUENCE [LARGE SCALE MRNA]</scope>
    <source>
        <tissue>Bone marrow</tissue>
    </source>
</reference>
<reference key="2">
    <citation type="journal article" date="2001" name="Nature">
        <title>The DNA sequence and comparative analysis of human chromosome 20.</title>
        <authorList>
            <person name="Deloukas P."/>
            <person name="Matthews L.H."/>
            <person name="Ashurst J.L."/>
            <person name="Burton J."/>
            <person name="Gilbert J.G.R."/>
            <person name="Jones M."/>
            <person name="Stavrides G."/>
            <person name="Almeida J.P."/>
            <person name="Babbage A.K."/>
            <person name="Bagguley C.L."/>
            <person name="Bailey J."/>
            <person name="Barlow K.F."/>
            <person name="Bates K.N."/>
            <person name="Beard L.M."/>
            <person name="Beare D.M."/>
            <person name="Beasley O.P."/>
            <person name="Bird C.P."/>
            <person name="Blakey S.E."/>
            <person name="Bridgeman A.M."/>
            <person name="Brown A.J."/>
            <person name="Buck D."/>
            <person name="Burrill W.D."/>
            <person name="Butler A.P."/>
            <person name="Carder C."/>
            <person name="Carter N.P."/>
            <person name="Chapman J.C."/>
            <person name="Clamp M."/>
            <person name="Clark G."/>
            <person name="Clark L.N."/>
            <person name="Clark S.Y."/>
            <person name="Clee C.M."/>
            <person name="Clegg S."/>
            <person name="Cobley V.E."/>
            <person name="Collier R.E."/>
            <person name="Connor R.E."/>
            <person name="Corby N.R."/>
            <person name="Coulson A."/>
            <person name="Coville G.J."/>
            <person name="Deadman R."/>
            <person name="Dhami P.D."/>
            <person name="Dunn M."/>
            <person name="Ellington A.G."/>
            <person name="Frankland J.A."/>
            <person name="Fraser A."/>
            <person name="French L."/>
            <person name="Garner P."/>
            <person name="Grafham D.V."/>
            <person name="Griffiths C."/>
            <person name="Griffiths M.N.D."/>
            <person name="Gwilliam R."/>
            <person name="Hall R.E."/>
            <person name="Hammond S."/>
            <person name="Harley J.L."/>
            <person name="Heath P.D."/>
            <person name="Ho S."/>
            <person name="Holden J.L."/>
            <person name="Howden P.J."/>
            <person name="Huckle E."/>
            <person name="Hunt A.R."/>
            <person name="Hunt S.E."/>
            <person name="Jekosch K."/>
            <person name="Johnson C.M."/>
            <person name="Johnson D."/>
            <person name="Kay M.P."/>
            <person name="Kimberley A.M."/>
            <person name="King A."/>
            <person name="Knights A."/>
            <person name="Laird G.K."/>
            <person name="Lawlor S."/>
            <person name="Lehvaeslaiho M.H."/>
            <person name="Leversha M.A."/>
            <person name="Lloyd C."/>
            <person name="Lloyd D.M."/>
            <person name="Lovell J.D."/>
            <person name="Marsh V.L."/>
            <person name="Martin S.L."/>
            <person name="McConnachie L.J."/>
            <person name="McLay K."/>
            <person name="McMurray A.A."/>
            <person name="Milne S.A."/>
            <person name="Mistry D."/>
            <person name="Moore M.J.F."/>
            <person name="Mullikin J.C."/>
            <person name="Nickerson T."/>
            <person name="Oliver K."/>
            <person name="Parker A."/>
            <person name="Patel R."/>
            <person name="Pearce T.A.V."/>
            <person name="Peck A.I."/>
            <person name="Phillimore B.J.C.T."/>
            <person name="Prathalingam S.R."/>
            <person name="Plumb R.W."/>
            <person name="Ramsay H."/>
            <person name="Rice C.M."/>
            <person name="Ross M.T."/>
            <person name="Scott C.E."/>
            <person name="Sehra H.K."/>
            <person name="Shownkeen R."/>
            <person name="Sims S."/>
            <person name="Skuce C.D."/>
            <person name="Smith M.L."/>
            <person name="Soderlund C."/>
            <person name="Steward C.A."/>
            <person name="Sulston J.E."/>
            <person name="Swann R.M."/>
            <person name="Sycamore N."/>
            <person name="Taylor R."/>
            <person name="Tee L."/>
            <person name="Thomas D.W."/>
            <person name="Thorpe A."/>
            <person name="Tracey A."/>
            <person name="Tromans A.C."/>
            <person name="Vaudin M."/>
            <person name="Wall M."/>
            <person name="Wallis J.M."/>
            <person name="Whitehead S.L."/>
            <person name="Whittaker P."/>
            <person name="Willey D.L."/>
            <person name="Williams L."/>
            <person name="Williams S.A."/>
            <person name="Wilming L."/>
            <person name="Wray P.W."/>
            <person name="Hubbard T."/>
            <person name="Durbin R.M."/>
            <person name="Bentley D.R."/>
            <person name="Beck S."/>
            <person name="Rogers J."/>
        </authorList>
    </citation>
    <scope>NUCLEOTIDE SEQUENCE [LARGE SCALE GENOMIC DNA]</scope>
</reference>
<reference key="3">
    <citation type="submission" date="2005-09" db="EMBL/GenBank/DDBJ databases">
        <authorList>
            <person name="Mural R.J."/>
            <person name="Istrail S."/>
            <person name="Sutton G.G."/>
            <person name="Florea L."/>
            <person name="Halpern A.L."/>
            <person name="Mobarry C.M."/>
            <person name="Lippert R."/>
            <person name="Walenz B."/>
            <person name="Shatkay H."/>
            <person name="Dew I."/>
            <person name="Miller J.R."/>
            <person name="Flanigan M.J."/>
            <person name="Edwards N.J."/>
            <person name="Bolanos R."/>
            <person name="Fasulo D."/>
            <person name="Halldorsson B.V."/>
            <person name="Hannenhalli S."/>
            <person name="Turner R."/>
            <person name="Yooseph S."/>
            <person name="Lu F."/>
            <person name="Nusskern D.R."/>
            <person name="Shue B.C."/>
            <person name="Zheng X.H."/>
            <person name="Zhong F."/>
            <person name="Delcher A.L."/>
            <person name="Huson D.H."/>
            <person name="Kravitz S.A."/>
            <person name="Mouchard L."/>
            <person name="Reinert K."/>
            <person name="Remington K.A."/>
            <person name="Clark A.G."/>
            <person name="Waterman M.S."/>
            <person name="Eichler E.E."/>
            <person name="Adams M.D."/>
            <person name="Hunkapiller M.W."/>
            <person name="Myers E.W."/>
            <person name="Venter J.C."/>
        </authorList>
    </citation>
    <scope>NUCLEOTIDE SEQUENCE [LARGE SCALE GENOMIC DNA]</scope>
</reference>
<reference key="4">
    <citation type="journal article" date="2004" name="Genome Res.">
        <title>The status, quality, and expansion of the NIH full-length cDNA project: the Mammalian Gene Collection (MGC).</title>
        <authorList>
            <consortium name="The MGC Project Team"/>
        </authorList>
    </citation>
    <scope>NUCLEOTIDE SEQUENCE [LARGE SCALE MRNA]</scope>
    <source>
        <tissue>Brain</tissue>
        <tissue>Muscle</tissue>
    </source>
</reference>
<reference key="5">
    <citation type="journal article" date="2008" name="J. Proteome Res.">
        <title>Phosphoproteome of resting human platelets.</title>
        <authorList>
            <person name="Zahedi R.P."/>
            <person name="Lewandrowski U."/>
            <person name="Wiesner J."/>
            <person name="Wortelkamp S."/>
            <person name="Moebius J."/>
            <person name="Schuetz C."/>
            <person name="Walter U."/>
            <person name="Gambaryan S."/>
            <person name="Sickmann A."/>
        </authorList>
    </citation>
    <scope>PHOSPHORYLATION [LARGE SCALE ANALYSIS] AT TYR-312</scope>
    <scope>IDENTIFICATION BY MASS SPECTROMETRY [LARGE SCALE ANALYSIS]</scope>
    <source>
        <tissue>Platelet</tissue>
    </source>
</reference>
<reference key="6">
    <citation type="journal article" date="2009" name="EMBO Rep.">
        <title>The human homologue of Dictyostelium discoideum phg1A is expressed by human metastatic melanoma cells.</title>
        <authorList>
            <person name="Lozupone F."/>
            <person name="Perdicchio M."/>
            <person name="Brambilla D."/>
            <person name="Borghi M."/>
            <person name="Meschini S."/>
            <person name="Barca S."/>
            <person name="Marino M.L."/>
            <person name="Logozzi M."/>
            <person name="Federici C."/>
            <person name="Iessi E."/>
            <person name="de Milito A."/>
            <person name="Fais S."/>
        </authorList>
    </citation>
    <scope>FUNCTION</scope>
    <scope>SUBCELLULAR LOCATION</scope>
    <scope>TISSUE SPECIFICITY</scope>
</reference>
<reference key="7">
    <citation type="journal article" date="2015" name="J. Cell Sci.">
        <title>TM9 family proteins control surface targeting of glycine-rich transmembrane domains.</title>
        <authorList>
            <person name="Perrin J."/>
            <person name="Le Coadic M."/>
            <person name="Vernay A."/>
            <person name="Dias M."/>
            <person name="Gopaldass N."/>
            <person name="Ouertatani-Sakouhi H."/>
            <person name="Cosson P."/>
        </authorList>
    </citation>
    <scope>FUNCTION</scope>
    <scope>SUBCELLULAR LOCATION</scope>
</reference>
<reference key="8">
    <citation type="journal article" date="2015" name="Oncogene">
        <title>TM9SF4 is a novel V-ATPase-interacting protein that modulates tumor pH alterations associated with drug resistance and invasiveness of colon cancer cells.</title>
        <authorList>
            <person name="Lozupone F."/>
            <person name="Borghi M."/>
            <person name="Marzoli F."/>
            <person name="Azzarito T."/>
            <person name="Matarrese P."/>
            <person name="Iessi E."/>
            <person name="Venturi G."/>
            <person name="Meschini S."/>
            <person name="Canitano A."/>
            <person name="Bona R."/>
            <person name="Cara A."/>
            <person name="Fais S."/>
        </authorList>
    </citation>
    <scope>FUNCTION</scope>
    <scope>INTERACTION WITH ATP6V1H</scope>
</reference>
<reference key="9">
    <citation type="journal article" date="2015" name="PLoS ONE">
        <title>Human TM9SF4 is a new gene down-regulated by hypoxia and involved in cell adhesion of leukemic cells.</title>
        <authorList>
            <person name="Paolillo R."/>
            <person name="Spinello I."/>
            <person name="Quaranta M.T."/>
            <person name="Pasquini L."/>
            <person name="Pelosi E."/>
            <person name="Lo Coco F."/>
            <person name="Testa U."/>
            <person name="Labbaye C."/>
        </authorList>
    </citation>
    <scope>FUNCTION</scope>
    <scope>INDUCTION</scope>
    <scope>TISSUE SPECIFICITY</scope>
</reference>
<reference key="10">
    <citation type="journal article" date="2015" name="Proteomics">
        <title>N-terminome analysis of the human mitochondrial proteome.</title>
        <authorList>
            <person name="Vaca Jacome A.S."/>
            <person name="Rabilloud T."/>
            <person name="Schaeffer-Reiss C."/>
            <person name="Rompais M."/>
            <person name="Ayoub D."/>
            <person name="Lane L."/>
            <person name="Bairoch A."/>
            <person name="Van Dorsselaer A."/>
            <person name="Carapito C."/>
        </authorList>
    </citation>
    <scope>IDENTIFICATION BY MASS SPECTROMETRY [LARGE SCALE ANALYSIS]</scope>
</reference>
<name>TM9S4_HUMAN</name>
<organism>
    <name type="scientific">Homo sapiens</name>
    <name type="common">Human</name>
    <dbReference type="NCBI Taxonomy" id="9606"/>
    <lineage>
        <taxon>Eukaryota</taxon>
        <taxon>Metazoa</taxon>
        <taxon>Chordata</taxon>
        <taxon>Craniata</taxon>
        <taxon>Vertebrata</taxon>
        <taxon>Euteleostomi</taxon>
        <taxon>Mammalia</taxon>
        <taxon>Eutheria</taxon>
        <taxon>Euarchontoglires</taxon>
        <taxon>Primates</taxon>
        <taxon>Haplorrhini</taxon>
        <taxon>Catarrhini</taxon>
        <taxon>Hominidae</taxon>
        <taxon>Homo</taxon>
    </lineage>
</organism>
<keyword id="KW-0967">Endosome</keyword>
<keyword id="KW-0333">Golgi apparatus</keyword>
<keyword id="KW-0472">Membrane</keyword>
<keyword id="KW-0597">Phosphoprotein</keyword>
<keyword id="KW-1267">Proteomics identification</keyword>
<keyword id="KW-1185">Reference proteome</keyword>
<keyword id="KW-0732">Signal</keyword>
<keyword id="KW-0812">Transmembrane</keyword>
<keyword id="KW-1133">Transmembrane helix</keyword>
<protein>
    <recommendedName>
        <fullName>Transmembrane 9 superfamily member 4</fullName>
    </recommendedName>
    <alternativeName>
        <fullName evidence="6">Tumor cannibalism associated protein 1</fullName>
    </alternativeName>
</protein>